<comment type="function">
    <text evidence="3 4">Protein-arginine N-acetylglucosaminyltransferase effector that catalyzes the transfer of a single N-acetylglucosamine (GlcNAc) to a conserved arginine residue of host target proteins (By similarity). In contrast to NleB1, not able to disrupt TNF signaling in infected cells (PubMed:28522607). Shows a lower enzymatic activity than NleB1 (By similarity).</text>
</comment>
<comment type="catalytic activity">
    <reaction evidence="3">
        <text>L-arginyl-[protein] + UDP-N-acetyl-alpha-D-glucosamine = N(omega)-(N-acetyl-beta-D-glucosaminyl)-L-arginyl-[protein] + UDP + H(+)</text>
        <dbReference type="Rhea" id="RHEA:66632"/>
        <dbReference type="Rhea" id="RHEA-COMP:10532"/>
        <dbReference type="Rhea" id="RHEA-COMP:17079"/>
        <dbReference type="ChEBI" id="CHEBI:15378"/>
        <dbReference type="ChEBI" id="CHEBI:29965"/>
        <dbReference type="ChEBI" id="CHEBI:57705"/>
        <dbReference type="ChEBI" id="CHEBI:58223"/>
        <dbReference type="ChEBI" id="CHEBI:167322"/>
    </reaction>
    <physiologicalReaction direction="left-to-right" evidence="3">
        <dbReference type="Rhea" id="RHEA:66633"/>
    </physiologicalReaction>
</comment>
<comment type="cofactor">
    <cofactor evidence="2">
        <name>Mn(2+)</name>
        <dbReference type="ChEBI" id="CHEBI:29035"/>
    </cofactor>
</comment>
<comment type="subcellular location">
    <subcellularLocation>
        <location evidence="1">Secreted</location>
    </subcellularLocation>
    <subcellularLocation>
        <location evidence="1">Host cell</location>
    </subcellularLocation>
    <text evidence="1">Secreted via the type III secretion system (T3SS).</text>
</comment>
<comment type="domain">
    <text evidence="2">Adopts a GT-A fold and acts as an inverting enzyme that converts the alpha-configuration in the UDP-N-acetyl-alpha-D-glucosamine donor to the beta configuration in the N-linked (GlcNAc) arginine product.</text>
</comment>
<comment type="similarity">
    <text evidence="6">Belongs to the glycosyltransferase NleB family.</text>
</comment>
<reference key="1">
    <citation type="journal article" date="2001" name="DNA Res.">
        <title>Complete genome sequence of enterohemorrhagic Escherichia coli O157:H7 and genomic comparison with a laboratory strain K-12.</title>
        <authorList>
            <person name="Hayashi T."/>
            <person name="Makino K."/>
            <person name="Ohnishi M."/>
            <person name="Kurokawa K."/>
            <person name="Ishii K."/>
            <person name="Yokoyama K."/>
            <person name="Han C.-G."/>
            <person name="Ohtsubo E."/>
            <person name="Nakayama K."/>
            <person name="Murata T."/>
            <person name="Tanaka M."/>
            <person name="Tobe T."/>
            <person name="Iida T."/>
            <person name="Takami H."/>
            <person name="Honda T."/>
            <person name="Sasakawa C."/>
            <person name="Ogasawara N."/>
            <person name="Yasunaga T."/>
            <person name="Kuhara S."/>
            <person name="Shiba T."/>
            <person name="Hattori M."/>
            <person name="Shinagawa H."/>
        </authorList>
    </citation>
    <scope>NUCLEOTIDE SEQUENCE [LARGE SCALE GENOMIC DNA]</scope>
    <source>
        <strain>O157:H7 / Sakai / RIMD 0509952 / EHEC</strain>
    </source>
</reference>
<reference key="2">
    <citation type="journal article" date="2017" name="J. Biol. Chem.">
        <title>NleB/SseK effectors from Citrobacter rodentium, Escherichia coli, and Salmonella enterica display distinct differences in host substrate specificity.</title>
        <authorList>
            <person name="El Qaidi S."/>
            <person name="Chen K."/>
            <person name="Halim A."/>
            <person name="Siukstaite L."/>
            <person name="Rueter C."/>
            <person name="Hurtado-Guerrero R."/>
            <person name="Clausen H."/>
            <person name="Hardwidge P.R."/>
        </authorList>
    </citation>
    <scope>FUNCTION</scope>
    <source>
        <strain>O157:H7 / Sakai / RIMD 0509952 / EHEC</strain>
    </source>
</reference>
<protein>
    <recommendedName>
        <fullName evidence="6">Protein-arginine N-acetylglucosaminyltransferase NleB2</fullName>
        <shortName evidence="6">Arginine GlcNAcyltransferase NleB2</shortName>
        <ecNumber evidence="3">2.4.1.-</ecNumber>
    </recommendedName>
</protein>
<evidence type="ECO:0000250" key="1">
    <source>
        <dbReference type="UniProtKB" id="A0A482PDI9"/>
    </source>
</evidence>
<evidence type="ECO:0000250" key="2">
    <source>
        <dbReference type="UniProtKB" id="B7UI21"/>
    </source>
</evidence>
<evidence type="ECO:0000250" key="3">
    <source>
        <dbReference type="UniProtKB" id="B7UNX3"/>
    </source>
</evidence>
<evidence type="ECO:0000269" key="4">
    <source>
    </source>
</evidence>
<evidence type="ECO:0000303" key="5">
    <source>
    </source>
</evidence>
<evidence type="ECO:0000305" key="6"/>
<evidence type="ECO:0000312" key="7">
    <source>
        <dbReference type="EMBL" id="BAB34269.1"/>
    </source>
</evidence>
<gene>
    <name evidence="5" type="primary">nleB2</name>
    <name evidence="7" type="ordered locus">ECs0846</name>
</gene>
<proteinExistence type="inferred from homology"/>
<dbReference type="EC" id="2.4.1.-" evidence="3"/>
<dbReference type="EMBL" id="BA000007">
    <property type="protein sequence ID" value="BAB34269.1"/>
    <property type="molecule type" value="Genomic_DNA"/>
</dbReference>
<dbReference type="RefSeq" id="WP_000950813.1">
    <property type="nucleotide sequence ID" value="NZ_VOAI01000006.1"/>
</dbReference>
<dbReference type="SMR" id="Q8X837"/>
<dbReference type="STRING" id="155864.Z0985"/>
<dbReference type="KEGG" id="ecs:ECs_0846"/>
<dbReference type="PATRIC" id="fig|386585.9.peg.961"/>
<dbReference type="eggNOG" id="ENOG502Z8RE">
    <property type="taxonomic scope" value="Bacteria"/>
</dbReference>
<dbReference type="HOGENOM" id="CLU_081850_0_0_6"/>
<dbReference type="Proteomes" id="UP000000558">
    <property type="component" value="Chromosome"/>
</dbReference>
<dbReference type="GO" id="GO:0005576">
    <property type="term" value="C:extracellular region"/>
    <property type="evidence" value="ECO:0007669"/>
    <property type="project" value="UniProtKB-SubCell"/>
</dbReference>
<dbReference type="GO" id="GO:0043657">
    <property type="term" value="C:host cell"/>
    <property type="evidence" value="ECO:0007669"/>
    <property type="project" value="UniProtKB-SubCell"/>
</dbReference>
<dbReference type="GO" id="GO:0016757">
    <property type="term" value="F:glycosyltransferase activity"/>
    <property type="evidence" value="ECO:0007669"/>
    <property type="project" value="UniProtKB-KW"/>
</dbReference>
<dbReference type="GO" id="GO:0046872">
    <property type="term" value="F:metal ion binding"/>
    <property type="evidence" value="ECO:0007669"/>
    <property type="project" value="UniProtKB-KW"/>
</dbReference>
<dbReference type="GO" id="GO:0090729">
    <property type="term" value="F:toxin activity"/>
    <property type="evidence" value="ECO:0007669"/>
    <property type="project" value="UniProtKB-KW"/>
</dbReference>
<dbReference type="GO" id="GO:0085034">
    <property type="term" value="P:symbiont-mediated suppression of host NF-kappaB cascade"/>
    <property type="evidence" value="ECO:0000269"/>
    <property type="project" value="SigSci"/>
</dbReference>
<dbReference type="NCBIfam" id="NF011909">
    <property type="entry name" value="PRK15382.1"/>
    <property type="match status" value="1"/>
</dbReference>
<dbReference type="Pfam" id="PF24688">
    <property type="entry name" value="SseK_NleB"/>
    <property type="match status" value="1"/>
</dbReference>
<organism>
    <name type="scientific">Escherichia coli O157:H7</name>
    <dbReference type="NCBI Taxonomy" id="83334"/>
    <lineage>
        <taxon>Bacteria</taxon>
        <taxon>Pseudomonadati</taxon>
        <taxon>Pseudomonadota</taxon>
        <taxon>Gammaproteobacteria</taxon>
        <taxon>Enterobacterales</taxon>
        <taxon>Enterobacteriaceae</taxon>
        <taxon>Escherichia</taxon>
    </lineage>
</organism>
<keyword id="KW-0328">Glycosyltransferase</keyword>
<keyword id="KW-0464">Manganese</keyword>
<keyword id="KW-0479">Metal-binding</keyword>
<keyword id="KW-1185">Reference proteome</keyword>
<keyword id="KW-0964">Secreted</keyword>
<keyword id="KW-0800">Toxin</keyword>
<keyword id="KW-0808">Transferase</keyword>
<keyword id="KW-0843">Virulence</keyword>
<feature type="chain" id="PRO_0000452594" description="Protein-arginine N-acetylglucosaminyltransferase NleB2">
    <location>
        <begin position="1"/>
        <end position="326"/>
    </location>
</feature>
<feature type="short sequence motif" description="DXD motif" evidence="6">
    <location>
        <begin position="218"/>
        <end position="220"/>
    </location>
</feature>
<feature type="active site" description="Proton acceptor" evidence="2">
    <location>
        <position position="250"/>
    </location>
</feature>
<feature type="binding site" evidence="2">
    <location>
        <begin position="45"/>
        <end position="47"/>
    </location>
    <ligand>
        <name>UDP-N-acetyl-alpha-D-glucosamine</name>
        <dbReference type="ChEBI" id="CHEBI:57705"/>
    </ligand>
</feature>
<feature type="binding site" evidence="2">
    <location>
        <position position="69"/>
    </location>
    <ligand>
        <name>UDP-N-acetyl-alpha-D-glucosamine</name>
        <dbReference type="ChEBI" id="CHEBI:57705"/>
    </ligand>
</feature>
<feature type="binding site" evidence="2">
    <location>
        <begin position="216"/>
        <end position="219"/>
    </location>
    <ligand>
        <name>UDP-N-acetyl-alpha-D-glucosamine</name>
        <dbReference type="ChEBI" id="CHEBI:57705"/>
    </ligand>
</feature>
<feature type="binding site" evidence="2">
    <location>
        <position position="220"/>
    </location>
    <ligand>
        <name>Mn(2+)</name>
        <dbReference type="ChEBI" id="CHEBI:29035"/>
    </ligand>
</feature>
<feature type="binding site" evidence="2">
    <location>
        <position position="317"/>
    </location>
    <ligand>
        <name>Mn(2+)</name>
        <dbReference type="ChEBI" id="CHEBI:29035"/>
    </ligand>
</feature>
<feature type="binding site" evidence="2">
    <location>
        <position position="319"/>
    </location>
    <ligand>
        <name>Mn(2+)</name>
        <dbReference type="ChEBI" id="CHEBI:29035"/>
    </ligand>
</feature>
<feature type="binding site" evidence="2">
    <location>
        <position position="319"/>
    </location>
    <ligand>
        <name>UDP-N-acetyl-alpha-D-glucosamine</name>
        <dbReference type="ChEBI" id="CHEBI:57705"/>
    </ligand>
</feature>
<feature type="binding site" evidence="2">
    <location>
        <begin position="324"/>
        <end position="326"/>
    </location>
    <ligand>
        <name>UDP-N-acetyl-alpha-D-glucosamine</name>
        <dbReference type="ChEBI" id="CHEBI:57705"/>
    </ligand>
</feature>
<accession>Q8X837</accession>
<accession>A0A0H3JCT5</accession>
<accession>A0A6M0JHG3</accession>
<accession>Q7AGE3</accession>
<sequence length="326" mass="38056">MLSPIRTTFHNSVNIVQSSPCQTVSFAGKEYELKVIDEKTPILFQWFEPNPERYKKDEVPIVNTKQHPYLDNVTNAARIESDRMIGIFVDGDFSVNQKTAFSKLERDFENVMIIYREDVDFSMYDRKLSDIYHDIICEQRLRTEDKRDEYLLNLLEKELREISKAQDSLISMYAKKRNHAWFDFFRNLALLKAGEIFRCTYNTKNHGISFGEGCIYLDMDMILTGKLGTIYAPDGISMHVDRRNDSVNIENSAIIVNRSNHPALLEGLSFMHSKVDAHPYYDGLGKGVKKYFNFTPLHNYNHFCDFIEFNHPNIIMNTSQYTCSSW</sequence>
<name>NLEB2_ECO57</name>